<comment type="function">
    <text evidence="2">Function in general translation initiation by promoting the binding of the formylmethionine-tRNA to ribosomes. Seems to function along with eIF-2.</text>
</comment>
<comment type="similarity">
    <text evidence="2">Belongs to the TRAFAC class translation factor GTPase superfamily. Classic translation factor GTPase family. IF-2 subfamily.</text>
</comment>
<sequence length="597" mass="66239">MSKTEVRLRQPIVVVLGHVDHGKTTLLDKIRGTAVVKKEPGEMTQEVGASFVPSSVIEKVAQPLKGIIPVKLEIPGLLFIDTPGHELFSNLRRRGGSVADIAILVVDITEGFQKQTIESIEILKDKKVPFLVAANKIDRIPGWRPIENETFTKSFRSQSQSVQKALDNYVYKLVMQLAEMGFNAERFDRVRDFTRYVSIVPVSGKTGEGLPELLALLAGLTQQYLKTRLRAVEGPAKGVILEVKEEQGLGHTIDVIIYDGILRKSDTIVLGGINGVIVTKIRNILLPAPLQDMRMTRSGYRSIDEISAAAGVKISAPGLEEALAGSPLYVANDEAKLQEARKLIEEELSKVRFSKNSTGIVVKADSLGSLESLVAGFEKIGIPVRVADIGPITKRDLIEAELSAKEVEEYGIIAAFRVKPIPGLDTSKVKIIYNDIIYQLIDDTIKYIEDLRERRKRRTLDSLVLPGKIKILPGYVFRRSDPAIVGVEVLGGVVRPKYPLIREDGQRVGEVLAIQDNKKNIERATKGMEVSMSIKGNIMIGRQVQEGDVLYTDVPQEDLEILFKNYKDSITEDMMEVIKELIKIKKAENPLYGIFIQ</sequence>
<keyword id="KW-0342">GTP-binding</keyword>
<keyword id="KW-0396">Initiation factor</keyword>
<keyword id="KW-0547">Nucleotide-binding</keyword>
<keyword id="KW-0648">Protein biosynthesis</keyword>
<keyword id="KW-1185">Reference proteome</keyword>
<dbReference type="EMBL" id="CP000682">
    <property type="protein sequence ID" value="ABP94207.1"/>
    <property type="molecule type" value="Genomic_DNA"/>
</dbReference>
<dbReference type="RefSeq" id="WP_011921176.1">
    <property type="nucleotide sequence ID" value="NZ_CP139956.1"/>
</dbReference>
<dbReference type="SMR" id="A4YCQ5"/>
<dbReference type="STRING" id="399549.Msed_0030"/>
<dbReference type="GeneID" id="97614961"/>
<dbReference type="KEGG" id="mse:Msed_0030"/>
<dbReference type="eggNOG" id="arCOG01560">
    <property type="taxonomic scope" value="Archaea"/>
</dbReference>
<dbReference type="HOGENOM" id="CLU_002656_3_3_2"/>
<dbReference type="Proteomes" id="UP000000242">
    <property type="component" value="Chromosome"/>
</dbReference>
<dbReference type="GO" id="GO:0005737">
    <property type="term" value="C:cytoplasm"/>
    <property type="evidence" value="ECO:0007669"/>
    <property type="project" value="TreeGrafter"/>
</dbReference>
<dbReference type="GO" id="GO:0005525">
    <property type="term" value="F:GTP binding"/>
    <property type="evidence" value="ECO:0007669"/>
    <property type="project" value="UniProtKB-KW"/>
</dbReference>
<dbReference type="GO" id="GO:0003924">
    <property type="term" value="F:GTPase activity"/>
    <property type="evidence" value="ECO:0007669"/>
    <property type="project" value="UniProtKB-UniRule"/>
</dbReference>
<dbReference type="GO" id="GO:0003743">
    <property type="term" value="F:translation initiation factor activity"/>
    <property type="evidence" value="ECO:0007669"/>
    <property type="project" value="UniProtKB-UniRule"/>
</dbReference>
<dbReference type="CDD" id="cd03703">
    <property type="entry name" value="aeIF5B_II"/>
    <property type="match status" value="1"/>
</dbReference>
<dbReference type="CDD" id="cd16266">
    <property type="entry name" value="IF2_aeIF5B_IV"/>
    <property type="match status" value="1"/>
</dbReference>
<dbReference type="CDD" id="cd01887">
    <property type="entry name" value="IF2_eIF5B"/>
    <property type="match status" value="1"/>
</dbReference>
<dbReference type="FunFam" id="3.40.50.300:FF:000112">
    <property type="entry name" value="Eukaryotic translation initiation factor 5B"/>
    <property type="match status" value="1"/>
</dbReference>
<dbReference type="FunFam" id="2.40.30.10:FF:000013">
    <property type="entry name" value="eukaryotic translation initiation factor 5B"/>
    <property type="match status" value="1"/>
</dbReference>
<dbReference type="FunFam" id="2.40.30.10:FF:000152">
    <property type="entry name" value="Probable translation initiation factor IF-2"/>
    <property type="match status" value="1"/>
</dbReference>
<dbReference type="Gene3D" id="3.40.50.300">
    <property type="entry name" value="P-loop containing nucleotide triphosphate hydrolases"/>
    <property type="match status" value="1"/>
</dbReference>
<dbReference type="Gene3D" id="2.40.30.10">
    <property type="entry name" value="Translation factors"/>
    <property type="match status" value="2"/>
</dbReference>
<dbReference type="Gene3D" id="3.40.50.10050">
    <property type="entry name" value="Translation initiation factor IF- 2, domain 3"/>
    <property type="match status" value="1"/>
</dbReference>
<dbReference type="HAMAP" id="MF_00100_A">
    <property type="entry name" value="IF_2_A"/>
    <property type="match status" value="1"/>
</dbReference>
<dbReference type="InterPro" id="IPR029459">
    <property type="entry name" value="EFTU-type"/>
</dbReference>
<dbReference type="InterPro" id="IPR027417">
    <property type="entry name" value="P-loop_NTPase"/>
</dbReference>
<dbReference type="InterPro" id="IPR005225">
    <property type="entry name" value="Small_GTP-bd"/>
</dbReference>
<dbReference type="InterPro" id="IPR000795">
    <property type="entry name" value="T_Tr_GTP-bd_dom"/>
</dbReference>
<dbReference type="InterPro" id="IPR004544">
    <property type="entry name" value="TF_aIF-2_arc"/>
</dbReference>
<dbReference type="InterPro" id="IPR015760">
    <property type="entry name" value="TIF_IF2"/>
</dbReference>
<dbReference type="InterPro" id="IPR023115">
    <property type="entry name" value="TIF_IF2_dom3"/>
</dbReference>
<dbReference type="InterPro" id="IPR036925">
    <property type="entry name" value="TIF_IF2_dom3_sf"/>
</dbReference>
<dbReference type="InterPro" id="IPR009000">
    <property type="entry name" value="Transl_B-barrel_sf"/>
</dbReference>
<dbReference type="NCBIfam" id="TIGR00491">
    <property type="entry name" value="aIF-2"/>
    <property type="match status" value="1"/>
</dbReference>
<dbReference type="NCBIfam" id="NF003078">
    <property type="entry name" value="PRK04004.1"/>
    <property type="match status" value="1"/>
</dbReference>
<dbReference type="NCBIfam" id="TIGR00231">
    <property type="entry name" value="small_GTP"/>
    <property type="match status" value="1"/>
</dbReference>
<dbReference type="PANTHER" id="PTHR43381:SF4">
    <property type="entry name" value="EUKARYOTIC TRANSLATION INITIATION FACTOR 5B"/>
    <property type="match status" value="1"/>
</dbReference>
<dbReference type="PANTHER" id="PTHR43381">
    <property type="entry name" value="TRANSLATION INITIATION FACTOR IF-2-RELATED"/>
    <property type="match status" value="1"/>
</dbReference>
<dbReference type="Pfam" id="PF00009">
    <property type="entry name" value="GTP_EFTU"/>
    <property type="match status" value="1"/>
</dbReference>
<dbReference type="Pfam" id="PF14578">
    <property type="entry name" value="GTP_EFTU_D4"/>
    <property type="match status" value="1"/>
</dbReference>
<dbReference type="Pfam" id="PF11987">
    <property type="entry name" value="IF-2"/>
    <property type="match status" value="1"/>
</dbReference>
<dbReference type="PRINTS" id="PR00315">
    <property type="entry name" value="ELONGATNFCT"/>
</dbReference>
<dbReference type="SUPFAM" id="SSF52156">
    <property type="entry name" value="Initiation factor IF2/eIF5b, domain 3"/>
    <property type="match status" value="1"/>
</dbReference>
<dbReference type="SUPFAM" id="SSF52540">
    <property type="entry name" value="P-loop containing nucleoside triphosphate hydrolases"/>
    <property type="match status" value="1"/>
</dbReference>
<dbReference type="SUPFAM" id="SSF50447">
    <property type="entry name" value="Translation proteins"/>
    <property type="match status" value="1"/>
</dbReference>
<dbReference type="PROSITE" id="PS51722">
    <property type="entry name" value="G_TR_2"/>
    <property type="match status" value="1"/>
</dbReference>
<evidence type="ECO:0000250" key="1"/>
<evidence type="ECO:0000255" key="2">
    <source>
        <dbReference type="HAMAP-Rule" id="MF_00100"/>
    </source>
</evidence>
<accession>A4YCQ5</accession>
<name>IF2P_METS5</name>
<organism>
    <name type="scientific">Metallosphaera sedula (strain ATCC 51363 / DSM 5348 / JCM 9185 / NBRC 15509 / TH2)</name>
    <dbReference type="NCBI Taxonomy" id="399549"/>
    <lineage>
        <taxon>Archaea</taxon>
        <taxon>Thermoproteota</taxon>
        <taxon>Thermoprotei</taxon>
        <taxon>Sulfolobales</taxon>
        <taxon>Sulfolobaceae</taxon>
        <taxon>Metallosphaera</taxon>
    </lineage>
</organism>
<protein>
    <recommendedName>
        <fullName evidence="2">Probable translation initiation factor IF-2</fullName>
    </recommendedName>
</protein>
<gene>
    <name evidence="2" type="primary">infB</name>
    <name type="ordered locus">Msed_0030</name>
</gene>
<feature type="chain" id="PRO_0000335525" description="Probable translation initiation factor IF-2">
    <location>
        <begin position="1"/>
        <end position="597"/>
    </location>
</feature>
<feature type="domain" description="tr-type G">
    <location>
        <begin position="8"/>
        <end position="225"/>
    </location>
</feature>
<feature type="region of interest" description="G1" evidence="1">
    <location>
        <begin position="17"/>
        <end position="24"/>
    </location>
</feature>
<feature type="region of interest" description="G2" evidence="1">
    <location>
        <begin position="42"/>
        <end position="46"/>
    </location>
</feature>
<feature type="region of interest" description="G3" evidence="1">
    <location>
        <begin position="81"/>
        <end position="84"/>
    </location>
</feature>
<feature type="region of interest" description="G4" evidence="1">
    <location>
        <begin position="135"/>
        <end position="138"/>
    </location>
</feature>
<feature type="region of interest" description="G5" evidence="1">
    <location>
        <begin position="203"/>
        <end position="205"/>
    </location>
</feature>
<feature type="binding site" evidence="2">
    <location>
        <begin position="17"/>
        <end position="24"/>
    </location>
    <ligand>
        <name>GTP</name>
        <dbReference type="ChEBI" id="CHEBI:37565"/>
    </ligand>
</feature>
<feature type="binding site" evidence="2">
    <location>
        <begin position="81"/>
        <end position="85"/>
    </location>
    <ligand>
        <name>GTP</name>
        <dbReference type="ChEBI" id="CHEBI:37565"/>
    </ligand>
</feature>
<feature type="binding site" evidence="2">
    <location>
        <begin position="135"/>
        <end position="138"/>
    </location>
    <ligand>
        <name>GTP</name>
        <dbReference type="ChEBI" id="CHEBI:37565"/>
    </ligand>
</feature>
<proteinExistence type="inferred from homology"/>
<reference key="1">
    <citation type="journal article" date="2008" name="Appl. Environ. Microbiol.">
        <title>The genome sequence of the metal-mobilizing, extremely thermoacidophilic archaeon Metallosphaera sedula provides insights into bioleaching-associated metabolism.</title>
        <authorList>
            <person name="Auernik K.S."/>
            <person name="Maezato Y."/>
            <person name="Blum P.H."/>
            <person name="Kelly R.M."/>
        </authorList>
    </citation>
    <scope>NUCLEOTIDE SEQUENCE [LARGE SCALE GENOMIC DNA]</scope>
    <source>
        <strain>ATCC 51363 / DSM 5348 / JCM 9185 / NBRC 15509 / TH2</strain>
    </source>
</reference>